<dbReference type="EC" id="3.1.26.5" evidence="1"/>
<dbReference type="EMBL" id="CP000503">
    <property type="protein sequence ID" value="ABM26896.1"/>
    <property type="molecule type" value="Genomic_DNA"/>
</dbReference>
<dbReference type="RefSeq" id="WP_011791314.1">
    <property type="nucleotide sequence ID" value="NC_008750.1"/>
</dbReference>
<dbReference type="SMR" id="A1RQF1"/>
<dbReference type="GeneID" id="67445482"/>
<dbReference type="KEGG" id="shw:Sputw3181_4094"/>
<dbReference type="HOGENOM" id="CLU_117179_11_0_6"/>
<dbReference type="Proteomes" id="UP000002597">
    <property type="component" value="Chromosome"/>
</dbReference>
<dbReference type="GO" id="GO:0030677">
    <property type="term" value="C:ribonuclease P complex"/>
    <property type="evidence" value="ECO:0007669"/>
    <property type="project" value="TreeGrafter"/>
</dbReference>
<dbReference type="GO" id="GO:0042781">
    <property type="term" value="F:3'-tRNA processing endoribonuclease activity"/>
    <property type="evidence" value="ECO:0007669"/>
    <property type="project" value="TreeGrafter"/>
</dbReference>
<dbReference type="GO" id="GO:0004526">
    <property type="term" value="F:ribonuclease P activity"/>
    <property type="evidence" value="ECO:0007669"/>
    <property type="project" value="UniProtKB-UniRule"/>
</dbReference>
<dbReference type="GO" id="GO:0000049">
    <property type="term" value="F:tRNA binding"/>
    <property type="evidence" value="ECO:0007669"/>
    <property type="project" value="UniProtKB-UniRule"/>
</dbReference>
<dbReference type="GO" id="GO:0001682">
    <property type="term" value="P:tRNA 5'-leader removal"/>
    <property type="evidence" value="ECO:0007669"/>
    <property type="project" value="UniProtKB-UniRule"/>
</dbReference>
<dbReference type="FunFam" id="3.30.230.10:FF:000016">
    <property type="entry name" value="Ribonuclease P protein component"/>
    <property type="match status" value="1"/>
</dbReference>
<dbReference type="Gene3D" id="3.30.230.10">
    <property type="match status" value="1"/>
</dbReference>
<dbReference type="HAMAP" id="MF_00227">
    <property type="entry name" value="RNase_P"/>
    <property type="match status" value="1"/>
</dbReference>
<dbReference type="InterPro" id="IPR020568">
    <property type="entry name" value="Ribosomal_Su5_D2-typ_SF"/>
</dbReference>
<dbReference type="InterPro" id="IPR014721">
    <property type="entry name" value="Ribsml_uS5_D2-typ_fold_subgr"/>
</dbReference>
<dbReference type="InterPro" id="IPR000100">
    <property type="entry name" value="RNase_P"/>
</dbReference>
<dbReference type="InterPro" id="IPR020539">
    <property type="entry name" value="RNase_P_CS"/>
</dbReference>
<dbReference type="NCBIfam" id="TIGR00188">
    <property type="entry name" value="rnpA"/>
    <property type="match status" value="1"/>
</dbReference>
<dbReference type="PANTHER" id="PTHR33992">
    <property type="entry name" value="RIBONUCLEASE P PROTEIN COMPONENT"/>
    <property type="match status" value="1"/>
</dbReference>
<dbReference type="PANTHER" id="PTHR33992:SF1">
    <property type="entry name" value="RIBONUCLEASE P PROTEIN COMPONENT"/>
    <property type="match status" value="1"/>
</dbReference>
<dbReference type="Pfam" id="PF00825">
    <property type="entry name" value="Ribonuclease_P"/>
    <property type="match status" value="1"/>
</dbReference>
<dbReference type="SUPFAM" id="SSF54211">
    <property type="entry name" value="Ribosomal protein S5 domain 2-like"/>
    <property type="match status" value="1"/>
</dbReference>
<dbReference type="PROSITE" id="PS00648">
    <property type="entry name" value="RIBONUCLEASE_P"/>
    <property type="match status" value="1"/>
</dbReference>
<organism>
    <name type="scientific">Shewanella sp. (strain W3-18-1)</name>
    <dbReference type="NCBI Taxonomy" id="351745"/>
    <lineage>
        <taxon>Bacteria</taxon>
        <taxon>Pseudomonadati</taxon>
        <taxon>Pseudomonadota</taxon>
        <taxon>Gammaproteobacteria</taxon>
        <taxon>Alteromonadales</taxon>
        <taxon>Shewanellaceae</taxon>
        <taxon>Shewanella</taxon>
    </lineage>
</organism>
<comment type="function">
    <text evidence="1">RNaseP catalyzes the removal of the 5'-leader sequence from pre-tRNA to produce the mature 5'-terminus. It can also cleave other RNA substrates such as 4.5S RNA. The protein component plays an auxiliary but essential role in vivo by binding to the 5'-leader sequence and broadening the substrate specificity of the ribozyme.</text>
</comment>
<comment type="catalytic activity">
    <reaction evidence="1">
        <text>Endonucleolytic cleavage of RNA, removing 5'-extranucleotides from tRNA precursor.</text>
        <dbReference type="EC" id="3.1.26.5"/>
    </reaction>
</comment>
<comment type="subunit">
    <text evidence="1">Consists of a catalytic RNA component (M1 or rnpB) and a protein subunit.</text>
</comment>
<comment type="similarity">
    <text evidence="1">Belongs to the RnpA family.</text>
</comment>
<reference key="1">
    <citation type="submission" date="2006-12" db="EMBL/GenBank/DDBJ databases">
        <title>Complete sequence of Shewanella sp. W3-18-1.</title>
        <authorList>
            <consortium name="US DOE Joint Genome Institute"/>
            <person name="Copeland A."/>
            <person name="Lucas S."/>
            <person name="Lapidus A."/>
            <person name="Barry K."/>
            <person name="Detter J.C."/>
            <person name="Glavina del Rio T."/>
            <person name="Hammon N."/>
            <person name="Israni S."/>
            <person name="Dalin E."/>
            <person name="Tice H."/>
            <person name="Pitluck S."/>
            <person name="Chain P."/>
            <person name="Malfatti S."/>
            <person name="Shin M."/>
            <person name="Vergez L."/>
            <person name="Schmutz J."/>
            <person name="Larimer F."/>
            <person name="Land M."/>
            <person name="Hauser L."/>
            <person name="Kyrpides N."/>
            <person name="Lykidis A."/>
            <person name="Tiedje J."/>
            <person name="Richardson P."/>
        </authorList>
    </citation>
    <scope>NUCLEOTIDE SEQUENCE [LARGE SCALE GENOMIC DNA]</scope>
    <source>
        <strain>W3-18-1</strain>
    </source>
</reference>
<keyword id="KW-0255">Endonuclease</keyword>
<keyword id="KW-0378">Hydrolase</keyword>
<keyword id="KW-0540">Nuclease</keyword>
<keyword id="KW-0694">RNA-binding</keyword>
<keyword id="KW-0819">tRNA processing</keyword>
<feature type="chain" id="PRO_1000021464" description="Ribonuclease P protein component">
    <location>
        <begin position="1"/>
        <end position="118"/>
    </location>
</feature>
<proteinExistence type="inferred from homology"/>
<gene>
    <name evidence="1" type="primary">rnpA</name>
    <name type="ordered locus">Sputw3181_4094</name>
</gene>
<sequence>MTSYTFTRELRLLTPAQFKSVFSNPIKASSAEITLLAIPNSEQHPRLGLTVAKRYVKRANQRNRIKRIIRDSFRLNQHDIPHLDIVVLVRNGVMEMENAEINKLIEKLWRKLSRRYNG</sequence>
<protein>
    <recommendedName>
        <fullName evidence="1">Ribonuclease P protein component</fullName>
        <shortName evidence="1">RNase P protein</shortName>
        <shortName evidence="1">RNaseP protein</shortName>
        <ecNumber evidence="1">3.1.26.5</ecNumber>
    </recommendedName>
    <alternativeName>
        <fullName evidence="1">Protein C5</fullName>
    </alternativeName>
</protein>
<name>RNPA_SHESW</name>
<accession>A1RQF1</accession>
<evidence type="ECO:0000255" key="1">
    <source>
        <dbReference type="HAMAP-Rule" id="MF_00227"/>
    </source>
</evidence>